<keyword id="KW-0025">Alternative splicing</keyword>
<keyword id="KW-0217">Developmental protein</keyword>
<keyword id="KW-0238">DNA-binding</keyword>
<keyword id="KW-0371">Homeobox</keyword>
<keyword id="KW-0539">Nucleus</keyword>
<keyword id="KW-0563">Paired box</keyword>
<keyword id="KW-1185">Reference proteome</keyword>
<keyword id="KW-0804">Transcription</keyword>
<keyword id="KW-0805">Transcription regulation</keyword>
<organism>
    <name type="scientific">Danio rerio</name>
    <name type="common">Zebrafish</name>
    <name type="synonym">Brachydanio rerio</name>
    <dbReference type="NCBI Taxonomy" id="7955"/>
    <lineage>
        <taxon>Eukaryota</taxon>
        <taxon>Metazoa</taxon>
        <taxon>Chordata</taxon>
        <taxon>Craniata</taxon>
        <taxon>Vertebrata</taxon>
        <taxon>Euteleostomi</taxon>
        <taxon>Actinopterygii</taxon>
        <taxon>Neopterygii</taxon>
        <taxon>Teleostei</taxon>
        <taxon>Ostariophysi</taxon>
        <taxon>Cypriniformes</taxon>
        <taxon>Danionidae</taxon>
        <taxon>Danioninae</taxon>
        <taxon>Danio</taxon>
    </lineage>
</organism>
<comment type="function">
    <text>Transcription factor expressed in spatially restricted regions of the neural tube during embryonic development.</text>
</comment>
<comment type="subcellular location">
    <subcellularLocation>
        <location>Nucleus</location>
    </subcellularLocation>
</comment>
<comment type="alternative products">
    <event type="alternative splicing"/>
    <isoform>
        <id>P26630-1</id>
        <name>Short</name>
        <sequence type="displayed"/>
    </isoform>
    <isoform>
        <id>P26630-2</id>
        <name>Long</name>
        <sequence type="described" ref="VSP_002367"/>
    </isoform>
</comment>
<comment type="tissue specificity">
    <text>Spatially restricted regions of the neural tube.</text>
</comment>
<comment type="similarity">
    <text evidence="4">Belongs to the paired homeobox family.</text>
</comment>
<name>PAX6_DANRE</name>
<dbReference type="EMBL" id="X61389">
    <property type="protein sequence ID" value="CAA43661.1"/>
    <property type="molecule type" value="mRNA"/>
</dbReference>
<dbReference type="EMBL" id="X63183">
    <property type="protein sequence ID" value="CAA44867.1"/>
    <property type="molecule type" value="mRNA"/>
</dbReference>
<dbReference type="EMBL" id="AL929172">
    <property type="protein sequence ID" value="CAM16649.1"/>
    <property type="molecule type" value="Genomic_DNA"/>
</dbReference>
<dbReference type="EMBL" id="BC066722">
    <property type="protein sequence ID" value="AAH66722.1"/>
    <property type="molecule type" value="mRNA"/>
</dbReference>
<dbReference type="PIR" id="I50108">
    <property type="entry name" value="I50108"/>
</dbReference>
<dbReference type="RefSeq" id="NP_571379.1">
    <molecule id="P26630-2"/>
    <property type="nucleotide sequence ID" value="NM_131304.1"/>
</dbReference>
<dbReference type="RefSeq" id="XP_009296158.1">
    <molecule id="P26630-1"/>
    <property type="nucleotide sequence ID" value="XM_009297883.4"/>
</dbReference>
<dbReference type="RefSeq" id="XP_017209537.1">
    <property type="nucleotide sequence ID" value="XM_017354048.1"/>
</dbReference>
<dbReference type="RefSeq" id="XP_021326122.1">
    <molecule id="P26630-1"/>
    <property type="nucleotide sequence ID" value="XM_021470447.2"/>
</dbReference>
<dbReference type="RefSeq" id="XP_068073414.1">
    <molecule id="P26630-2"/>
    <property type="nucleotide sequence ID" value="XM_068217313.1"/>
</dbReference>
<dbReference type="BMRB" id="P26630"/>
<dbReference type="SMR" id="P26630"/>
<dbReference type="ELM" id="P26630"/>
<dbReference type="FunCoup" id="P26630">
    <property type="interactions" value="362"/>
</dbReference>
<dbReference type="STRING" id="7955.ENSDARP00000135767"/>
<dbReference type="iPTMnet" id="P26630"/>
<dbReference type="PaxDb" id="7955-ENSDARP00000106729"/>
<dbReference type="Ensembl" id="ENSDART00000162485">
    <molecule id="P26630-1"/>
    <property type="protein sequence ID" value="ENSDARP00000139430"/>
    <property type="gene ID" value="ENSDARG00000103379"/>
</dbReference>
<dbReference type="GeneID" id="30567"/>
<dbReference type="KEGG" id="dre:30567"/>
<dbReference type="AGR" id="ZFIN:ZDB-GENE-990415-200"/>
<dbReference type="CTD" id="30567"/>
<dbReference type="ZFIN" id="ZDB-GENE-990415-200">
    <property type="gene designation" value="pax6a"/>
</dbReference>
<dbReference type="eggNOG" id="KOG0849">
    <property type="taxonomic scope" value="Eukaryota"/>
</dbReference>
<dbReference type="InParanoid" id="P26630"/>
<dbReference type="OMA" id="YSHAHST"/>
<dbReference type="OrthoDB" id="3225452at2759"/>
<dbReference type="PhylomeDB" id="P26630"/>
<dbReference type="PRO" id="PR:P26630"/>
<dbReference type="Proteomes" id="UP000000437">
    <property type="component" value="Chromosome 25"/>
</dbReference>
<dbReference type="Bgee" id="ENSDARG00000103379">
    <property type="expression patterns" value="Expressed in immature eye and 68 other cell types or tissues"/>
</dbReference>
<dbReference type="ExpressionAtlas" id="P26630">
    <property type="expression patterns" value="baseline and differential"/>
</dbReference>
<dbReference type="GO" id="GO:0005634">
    <property type="term" value="C:nucleus"/>
    <property type="evidence" value="ECO:0000314"/>
    <property type="project" value="ZFIN"/>
</dbReference>
<dbReference type="GO" id="GO:0000981">
    <property type="term" value="F:DNA-binding transcription factor activity, RNA polymerase II-specific"/>
    <property type="evidence" value="ECO:0000314"/>
    <property type="project" value="ZFIN"/>
</dbReference>
<dbReference type="GO" id="GO:0000978">
    <property type="term" value="F:RNA polymerase II cis-regulatory region sequence-specific DNA binding"/>
    <property type="evidence" value="ECO:0000318"/>
    <property type="project" value="GO_Central"/>
</dbReference>
<dbReference type="GO" id="GO:0043565">
    <property type="term" value="F:sequence-specific DNA binding"/>
    <property type="evidence" value="ECO:0000314"/>
    <property type="project" value="ZFIN"/>
</dbReference>
<dbReference type="GO" id="GO:0009952">
    <property type="term" value="P:anterior/posterior pattern specification"/>
    <property type="evidence" value="ECO:0000315"/>
    <property type="project" value="ZFIN"/>
</dbReference>
<dbReference type="GO" id="GO:0007420">
    <property type="term" value="P:brain development"/>
    <property type="evidence" value="ECO:0000318"/>
    <property type="project" value="GO_Central"/>
</dbReference>
<dbReference type="GO" id="GO:0021538">
    <property type="term" value="P:epithalamus development"/>
    <property type="evidence" value="ECO:0000316"/>
    <property type="project" value="ZFIN"/>
</dbReference>
<dbReference type="GO" id="GO:0030900">
    <property type="term" value="P:forebrain development"/>
    <property type="evidence" value="ECO:0000316"/>
    <property type="project" value="ZFIN"/>
</dbReference>
<dbReference type="GO" id="GO:0021986">
    <property type="term" value="P:habenula development"/>
    <property type="evidence" value="ECO:0000315"/>
    <property type="project" value="ZFIN"/>
</dbReference>
<dbReference type="GO" id="GO:0030902">
    <property type="term" value="P:hindbrain development"/>
    <property type="evidence" value="ECO:0000315"/>
    <property type="project" value="ZFIN"/>
</dbReference>
<dbReference type="GO" id="GO:0001755">
    <property type="term" value="P:neural crest cell migration"/>
    <property type="evidence" value="ECO:0000316"/>
    <property type="project" value="ZFIN"/>
</dbReference>
<dbReference type="GO" id="GO:0008284">
    <property type="term" value="P:positive regulation of cell population proliferation"/>
    <property type="evidence" value="ECO:0000315"/>
    <property type="project" value="UniProtKB"/>
</dbReference>
<dbReference type="GO" id="GO:0045944">
    <property type="term" value="P:positive regulation of transcription by RNA polymerase II"/>
    <property type="evidence" value="ECO:0000314"/>
    <property type="project" value="ZFIN"/>
</dbReference>
<dbReference type="GO" id="GO:0010468">
    <property type="term" value="P:regulation of gene expression"/>
    <property type="evidence" value="ECO:0000316"/>
    <property type="project" value="ZFIN"/>
</dbReference>
<dbReference type="GO" id="GO:0006357">
    <property type="term" value="P:regulation of transcription by RNA polymerase II"/>
    <property type="evidence" value="ECO:0000318"/>
    <property type="project" value="GO_Central"/>
</dbReference>
<dbReference type="GO" id="GO:0060041">
    <property type="term" value="P:retina development in camera-type eye"/>
    <property type="evidence" value="ECO:0000318"/>
    <property type="project" value="GO_Central"/>
</dbReference>
<dbReference type="GO" id="GO:0042670">
    <property type="term" value="P:retinal cone cell differentiation"/>
    <property type="evidence" value="ECO:0000315"/>
    <property type="project" value="UniProtKB"/>
</dbReference>
<dbReference type="GO" id="GO:0060221">
    <property type="term" value="P:retinal rod cell differentiation"/>
    <property type="evidence" value="ECO:0000315"/>
    <property type="project" value="UniProtKB"/>
</dbReference>
<dbReference type="GO" id="GO:0007423">
    <property type="term" value="P:sensory organ development"/>
    <property type="evidence" value="ECO:0000318"/>
    <property type="project" value="GO_Central"/>
</dbReference>
<dbReference type="GO" id="GO:0003309">
    <property type="term" value="P:type B pancreatic cell differentiation"/>
    <property type="evidence" value="ECO:0000318"/>
    <property type="project" value="GO_Central"/>
</dbReference>
<dbReference type="CDD" id="cd00086">
    <property type="entry name" value="homeodomain"/>
    <property type="match status" value="1"/>
</dbReference>
<dbReference type="CDD" id="cd00131">
    <property type="entry name" value="PAX"/>
    <property type="match status" value="1"/>
</dbReference>
<dbReference type="FunFam" id="1.10.10.10:FF:000003">
    <property type="entry name" value="Paired box protein Pax-6"/>
    <property type="match status" value="1"/>
</dbReference>
<dbReference type="FunFam" id="1.10.10.10:FF:000069">
    <property type="entry name" value="Paired box protein Pax-6"/>
    <property type="match status" value="1"/>
</dbReference>
<dbReference type="FunFam" id="1.10.10.60:FF:000516">
    <property type="entry name" value="Transcription factor Toy"/>
    <property type="match status" value="1"/>
</dbReference>
<dbReference type="Gene3D" id="1.10.10.60">
    <property type="entry name" value="Homeodomain-like"/>
    <property type="match status" value="1"/>
</dbReference>
<dbReference type="Gene3D" id="1.10.10.10">
    <property type="entry name" value="Winged helix-like DNA-binding domain superfamily/Winged helix DNA-binding domain"/>
    <property type="match status" value="2"/>
</dbReference>
<dbReference type="InterPro" id="IPR001356">
    <property type="entry name" value="HD"/>
</dbReference>
<dbReference type="InterPro" id="IPR017970">
    <property type="entry name" value="Homeobox_CS"/>
</dbReference>
<dbReference type="InterPro" id="IPR009057">
    <property type="entry name" value="Homeodomain-like_sf"/>
</dbReference>
<dbReference type="InterPro" id="IPR043182">
    <property type="entry name" value="PAIRED_DNA-bd_dom"/>
</dbReference>
<dbReference type="InterPro" id="IPR001523">
    <property type="entry name" value="Paired_dom"/>
</dbReference>
<dbReference type="InterPro" id="IPR043565">
    <property type="entry name" value="PAX_fam"/>
</dbReference>
<dbReference type="InterPro" id="IPR036388">
    <property type="entry name" value="WH-like_DNA-bd_sf"/>
</dbReference>
<dbReference type="PANTHER" id="PTHR45636:SF44">
    <property type="entry name" value="PAIRED BOX 10-RELATED"/>
    <property type="match status" value="1"/>
</dbReference>
<dbReference type="PANTHER" id="PTHR45636">
    <property type="entry name" value="PAIRED BOX PROTEIN PAX-6-RELATED-RELATED"/>
    <property type="match status" value="1"/>
</dbReference>
<dbReference type="Pfam" id="PF00046">
    <property type="entry name" value="Homeodomain"/>
    <property type="match status" value="1"/>
</dbReference>
<dbReference type="Pfam" id="PF00292">
    <property type="entry name" value="PAX"/>
    <property type="match status" value="1"/>
</dbReference>
<dbReference type="PRINTS" id="PR00027">
    <property type="entry name" value="PAIREDBOX"/>
</dbReference>
<dbReference type="SMART" id="SM00389">
    <property type="entry name" value="HOX"/>
    <property type="match status" value="1"/>
</dbReference>
<dbReference type="SMART" id="SM00351">
    <property type="entry name" value="PAX"/>
    <property type="match status" value="1"/>
</dbReference>
<dbReference type="SUPFAM" id="SSF46689">
    <property type="entry name" value="Homeodomain-like"/>
    <property type="match status" value="2"/>
</dbReference>
<dbReference type="PROSITE" id="PS00027">
    <property type="entry name" value="HOMEOBOX_1"/>
    <property type="match status" value="1"/>
</dbReference>
<dbReference type="PROSITE" id="PS50071">
    <property type="entry name" value="HOMEOBOX_2"/>
    <property type="match status" value="1"/>
</dbReference>
<dbReference type="PROSITE" id="PS00034">
    <property type="entry name" value="PAIRED_1"/>
    <property type="match status" value="1"/>
</dbReference>
<dbReference type="PROSITE" id="PS51057">
    <property type="entry name" value="PAIRED_2"/>
    <property type="match status" value="1"/>
</dbReference>
<feature type="chain" id="PRO_0000050191" description="Paired box protein Pax-6">
    <location>
        <begin position="1"/>
        <end position="437"/>
    </location>
</feature>
<feature type="DNA-binding region" description="Paired" evidence="2">
    <location>
        <begin position="23"/>
        <end position="149"/>
    </location>
</feature>
<feature type="DNA-binding region" description="Homeobox" evidence="1">
    <location>
        <begin position="229"/>
        <end position="288"/>
    </location>
</feature>
<feature type="region of interest" description="PAI subdomain" evidence="2">
    <location>
        <begin position="26"/>
        <end position="82"/>
    </location>
</feature>
<feature type="region of interest" description="RED subdomain" evidence="2">
    <location>
        <begin position="101"/>
        <end position="149"/>
    </location>
</feature>
<feature type="region of interest" description="Disordered" evidence="3">
    <location>
        <begin position="174"/>
        <end position="222"/>
    </location>
</feature>
<feature type="region of interest" description="Disordered" evidence="3">
    <location>
        <begin position="286"/>
        <end position="317"/>
    </location>
</feature>
<feature type="compositionally biased region" description="Polar residues" evidence="3">
    <location>
        <begin position="187"/>
        <end position="213"/>
    </location>
</feature>
<feature type="compositionally biased region" description="Low complexity" evidence="3">
    <location>
        <begin position="295"/>
        <end position="313"/>
    </location>
</feature>
<feature type="splice variant" id="VSP_002367" description="In isoform Long." evidence="4">
    <original>Q</original>
    <variation>QTHADAKVQVLDNEN</variation>
    <location>
        <position position="66"/>
    </location>
</feature>
<accession>P26630</accession>
<accession>A2AUN5</accession>
<gene>
    <name type="primary">pax6a</name>
    <name type="synonym">pax[zf-a]</name>
    <name type="synonym">paxzf-a</name>
    <name type="ORF">si:dkeyp-46c10.1</name>
</gene>
<protein>
    <recommendedName>
        <fullName>Paired box protein Pax-6</fullName>
    </recommendedName>
    <alternativeName>
        <fullName>Pax[Zf-a]</fullName>
    </alternativeName>
</protein>
<evidence type="ECO:0000255" key="1">
    <source>
        <dbReference type="PROSITE-ProRule" id="PRU00108"/>
    </source>
</evidence>
<evidence type="ECO:0000255" key="2">
    <source>
        <dbReference type="PROSITE-ProRule" id="PRU00381"/>
    </source>
</evidence>
<evidence type="ECO:0000256" key="3">
    <source>
        <dbReference type="SAM" id="MobiDB-lite"/>
    </source>
</evidence>
<evidence type="ECO:0000305" key="4"/>
<proteinExistence type="evidence at transcript level"/>
<reference key="1">
    <citation type="journal article" date="1991" name="EMBO J.">
        <title>Zebrafish pax[zf-a]: a paired box-containing gene expressed in the neural tube.</title>
        <authorList>
            <person name="Krauss S."/>
            <person name="Johansen T."/>
            <person name="Korzh V."/>
            <person name="Moens U."/>
            <person name="Ericson J.U."/>
            <person name="Fjose A."/>
        </authorList>
    </citation>
    <scope>NUCLEOTIDE SEQUENCE [MRNA]</scope>
</reference>
<reference key="2">
    <citation type="journal article" date="1991" name="Nature">
        <title>Expression pattern of zebrafish pax genes suggests a role in early brain regionalization.</title>
        <authorList>
            <person name="Krauss S."/>
            <person name="Johanson T."/>
            <person name="Korzh V."/>
            <person name="Fjose A."/>
        </authorList>
    </citation>
    <scope>NUCLEOTIDE SEQUENCE [MRNA]</scope>
    <source>
        <tissue>Embryo</tissue>
    </source>
</reference>
<reference key="3">
    <citation type="journal article" date="1992" name="Development">
        <title>Sequence and expression pattern of pax-6 are highly conserved between zebrafish and mice.</title>
        <authorList>
            <person name="Pueschel A.W.P."/>
            <person name="Gruss P."/>
            <person name="Westerfield M."/>
        </authorList>
    </citation>
    <scope>NUCLEOTIDE SEQUENCE [MRNA]</scope>
</reference>
<reference key="4">
    <citation type="journal article" date="2013" name="Nature">
        <title>The zebrafish reference genome sequence and its relationship to the human genome.</title>
        <authorList>
            <person name="Howe K."/>
            <person name="Clark M.D."/>
            <person name="Torroja C.F."/>
            <person name="Torrance J."/>
            <person name="Berthelot C."/>
            <person name="Muffato M."/>
            <person name="Collins J.E."/>
            <person name="Humphray S."/>
            <person name="McLaren K."/>
            <person name="Matthews L."/>
            <person name="McLaren S."/>
            <person name="Sealy I."/>
            <person name="Caccamo M."/>
            <person name="Churcher C."/>
            <person name="Scott C."/>
            <person name="Barrett J.C."/>
            <person name="Koch R."/>
            <person name="Rauch G.J."/>
            <person name="White S."/>
            <person name="Chow W."/>
            <person name="Kilian B."/>
            <person name="Quintais L.T."/>
            <person name="Guerra-Assuncao J.A."/>
            <person name="Zhou Y."/>
            <person name="Gu Y."/>
            <person name="Yen J."/>
            <person name="Vogel J.H."/>
            <person name="Eyre T."/>
            <person name="Redmond S."/>
            <person name="Banerjee R."/>
            <person name="Chi J."/>
            <person name="Fu B."/>
            <person name="Langley E."/>
            <person name="Maguire S.F."/>
            <person name="Laird G.K."/>
            <person name="Lloyd D."/>
            <person name="Kenyon E."/>
            <person name="Donaldson S."/>
            <person name="Sehra H."/>
            <person name="Almeida-King J."/>
            <person name="Loveland J."/>
            <person name="Trevanion S."/>
            <person name="Jones M."/>
            <person name="Quail M."/>
            <person name="Willey D."/>
            <person name="Hunt A."/>
            <person name="Burton J."/>
            <person name="Sims S."/>
            <person name="McLay K."/>
            <person name="Plumb B."/>
            <person name="Davis J."/>
            <person name="Clee C."/>
            <person name="Oliver K."/>
            <person name="Clark R."/>
            <person name="Riddle C."/>
            <person name="Elliot D."/>
            <person name="Threadgold G."/>
            <person name="Harden G."/>
            <person name="Ware D."/>
            <person name="Begum S."/>
            <person name="Mortimore B."/>
            <person name="Kerry G."/>
            <person name="Heath P."/>
            <person name="Phillimore B."/>
            <person name="Tracey A."/>
            <person name="Corby N."/>
            <person name="Dunn M."/>
            <person name="Johnson C."/>
            <person name="Wood J."/>
            <person name="Clark S."/>
            <person name="Pelan S."/>
            <person name="Griffiths G."/>
            <person name="Smith M."/>
            <person name="Glithero R."/>
            <person name="Howden P."/>
            <person name="Barker N."/>
            <person name="Lloyd C."/>
            <person name="Stevens C."/>
            <person name="Harley J."/>
            <person name="Holt K."/>
            <person name="Panagiotidis G."/>
            <person name="Lovell J."/>
            <person name="Beasley H."/>
            <person name="Henderson C."/>
            <person name="Gordon D."/>
            <person name="Auger K."/>
            <person name="Wright D."/>
            <person name="Collins J."/>
            <person name="Raisen C."/>
            <person name="Dyer L."/>
            <person name="Leung K."/>
            <person name="Robertson L."/>
            <person name="Ambridge K."/>
            <person name="Leongamornlert D."/>
            <person name="McGuire S."/>
            <person name="Gilderthorp R."/>
            <person name="Griffiths C."/>
            <person name="Manthravadi D."/>
            <person name="Nichol S."/>
            <person name="Barker G."/>
            <person name="Whitehead S."/>
            <person name="Kay M."/>
            <person name="Brown J."/>
            <person name="Murnane C."/>
            <person name="Gray E."/>
            <person name="Humphries M."/>
            <person name="Sycamore N."/>
            <person name="Barker D."/>
            <person name="Saunders D."/>
            <person name="Wallis J."/>
            <person name="Babbage A."/>
            <person name="Hammond S."/>
            <person name="Mashreghi-Mohammadi M."/>
            <person name="Barr L."/>
            <person name="Martin S."/>
            <person name="Wray P."/>
            <person name="Ellington A."/>
            <person name="Matthews N."/>
            <person name="Ellwood M."/>
            <person name="Woodmansey R."/>
            <person name="Clark G."/>
            <person name="Cooper J."/>
            <person name="Tromans A."/>
            <person name="Grafham D."/>
            <person name="Skuce C."/>
            <person name="Pandian R."/>
            <person name="Andrews R."/>
            <person name="Harrison E."/>
            <person name="Kimberley A."/>
            <person name="Garnett J."/>
            <person name="Fosker N."/>
            <person name="Hall R."/>
            <person name="Garner P."/>
            <person name="Kelly D."/>
            <person name="Bird C."/>
            <person name="Palmer S."/>
            <person name="Gehring I."/>
            <person name="Berger A."/>
            <person name="Dooley C.M."/>
            <person name="Ersan-Urun Z."/>
            <person name="Eser C."/>
            <person name="Geiger H."/>
            <person name="Geisler M."/>
            <person name="Karotki L."/>
            <person name="Kirn A."/>
            <person name="Konantz J."/>
            <person name="Konantz M."/>
            <person name="Oberlander M."/>
            <person name="Rudolph-Geiger S."/>
            <person name="Teucke M."/>
            <person name="Lanz C."/>
            <person name="Raddatz G."/>
            <person name="Osoegawa K."/>
            <person name="Zhu B."/>
            <person name="Rapp A."/>
            <person name="Widaa S."/>
            <person name="Langford C."/>
            <person name="Yang F."/>
            <person name="Schuster S.C."/>
            <person name="Carter N.P."/>
            <person name="Harrow J."/>
            <person name="Ning Z."/>
            <person name="Herrero J."/>
            <person name="Searle S.M."/>
            <person name="Enright A."/>
            <person name="Geisler R."/>
            <person name="Plasterk R.H."/>
            <person name="Lee C."/>
            <person name="Westerfield M."/>
            <person name="de Jong P.J."/>
            <person name="Zon L.I."/>
            <person name="Postlethwait J.H."/>
            <person name="Nusslein-Volhard C."/>
            <person name="Hubbard T.J."/>
            <person name="Roest Crollius H."/>
            <person name="Rogers J."/>
            <person name="Stemple D.L."/>
        </authorList>
    </citation>
    <scope>NUCLEOTIDE SEQUENCE [LARGE SCALE GENOMIC DNA]</scope>
    <source>
        <strain>Tuebingen</strain>
    </source>
</reference>
<reference key="5">
    <citation type="submission" date="2004-03" db="EMBL/GenBank/DDBJ databases">
        <authorList>
            <consortium name="NIH - Zebrafish Gene Collection (ZGC) project"/>
        </authorList>
    </citation>
    <scope>NUCLEOTIDE SEQUENCE [LARGE SCALE MRNA]</scope>
    <source>
        <tissue>Embryo</tissue>
    </source>
</reference>
<sequence>MPQKEYYNRATWESGVASMMQNSHSGVNQLGGVFVNGRPLPDSTRQKIVELAHSGARPCDISRILQVSNGCVSKILGRYYETGSIRPRAIGGSKPRVATPEVVGKIAQYKRECPSIFAWEIRDRLLSEGVCTNDNIPSVSSINRVLRNLASEKQQMGADGMYEKLRMLNGQTGTWGTRPGWYPGTSVPGQPNQDGCQQSDGGGENTNSISSNGEDSDETQMRLQLKRKLQRNRTSFTQEQIEALEKEFERTHYPDVFARERLAAKIDLPEARIQVWFSNRRAKWRREEKLRNQRRQASNSSSHIPISSSFSTSVYQPIPQPTTPVSFTSGSMLGRSDTALTNTYSALPPMPSFTMANNLPMQPSQTSSYSCMLPTSPSVNGRSYDTYTPPHMQAHMNSQSMAASGTTSTGLISPGVSVPVQVPGSEPDMSQYWPRLQ</sequence>